<evidence type="ECO:0000250" key="1">
    <source>
        <dbReference type="UniProtKB" id="B6D5I7"/>
    </source>
</evidence>
<evidence type="ECO:0000269" key="2">
    <source>
    </source>
</evidence>
<evidence type="ECO:0000303" key="3">
    <source>
    </source>
</evidence>
<evidence type="ECO:0000305" key="4"/>
<evidence type="ECO:0000305" key="5">
    <source>
    </source>
</evidence>
<keyword id="KW-0017">Alkaloid metabolism</keyword>
<keyword id="KW-0489">Methyltransferase</keyword>
<keyword id="KW-0949">S-adenosyl-L-methionine</keyword>
<keyword id="KW-0808">Transferase</keyword>
<reference key="1">
    <citation type="journal article" date="2011" name="Genome Biol.">
        <title>Comparative and functional genomics provide insights into the pathogenicity of dermatophytic fungi.</title>
        <authorList>
            <person name="Burmester A."/>
            <person name="Shelest E."/>
            <person name="Gloeckner G."/>
            <person name="Heddergott C."/>
            <person name="Schindler S."/>
            <person name="Staib P."/>
            <person name="Heidel A."/>
            <person name="Felder M."/>
            <person name="Petzold A."/>
            <person name="Szafranski K."/>
            <person name="Feuermann M."/>
            <person name="Pedruzzi I."/>
            <person name="Priebe S."/>
            <person name="Groth M."/>
            <person name="Winkler R."/>
            <person name="Li W."/>
            <person name="Kniemeyer O."/>
            <person name="Schroeckh V."/>
            <person name="Hertweck C."/>
            <person name="Hube B."/>
            <person name="White T.C."/>
            <person name="Platzer M."/>
            <person name="Guthke R."/>
            <person name="Heitman J."/>
            <person name="Woestemeyer J."/>
            <person name="Zipfel P.F."/>
            <person name="Monod M."/>
            <person name="Brakhage A.A."/>
        </authorList>
    </citation>
    <scope>NUCLEOTIDE SEQUENCE [LARGE SCALE GENOMIC DNA]</scope>
    <source>
        <strain>HKI 0517</strain>
    </source>
</reference>
<reference key="2">
    <citation type="journal article" date="2012" name="Microbiology">
        <title>Genome mining reveals the presence of a conserved gene cluster for the biosynthesis of ergot alkaloid precursors in the fungal family Arthrodermataceae.</title>
        <authorList>
            <person name="Wallwey C."/>
            <person name="Heddergott C."/>
            <person name="Xie X."/>
            <person name="Brakhage A.A."/>
            <person name="Li S.M."/>
        </authorList>
    </citation>
    <scope>FUNCTION</scope>
</reference>
<organism>
    <name type="scientific">Trichophyton verrucosum (strain HKI 0517)</name>
    <dbReference type="NCBI Taxonomy" id="663202"/>
    <lineage>
        <taxon>Eukaryota</taxon>
        <taxon>Fungi</taxon>
        <taxon>Dikarya</taxon>
        <taxon>Ascomycota</taxon>
        <taxon>Pezizomycotina</taxon>
        <taxon>Eurotiomycetes</taxon>
        <taxon>Eurotiomycetidae</taxon>
        <taxon>Onygenales</taxon>
        <taxon>Arthrodermataceae</taxon>
        <taxon>Trichophyton</taxon>
    </lineage>
</organism>
<name>EASF_TRIVH</name>
<protein>
    <recommendedName>
        <fullName evidence="1">4-dimethylallyltryptophan N-methyltransferase easF</fullName>
        <ecNumber evidence="1">2.1.1.261</ecNumber>
    </recommendedName>
    <alternativeName>
        <fullName evidence="1">4-dimethylallyltryptophan methyltransferase</fullName>
    </alternativeName>
    <alternativeName>
        <fullName evidence="3">Ergot alkaloid synthesis protein F</fullName>
    </alternativeName>
</protein>
<comment type="function">
    <text evidence="2">4-dimethylallyltryptophan N-methyltransferase; part of the gene cluster that mediates the biosynthesis of fungal ergot alkaloid (PubMed:22403186). DmaW catalyzes the first step of ergot alkaloid biosynthesis by condensing dimethylallyl diphosphate (DMAP) and tryptophan to form 4-dimethylallyl-L-tryptophan (PubMed:22403186). The second step is catalyzed by the methyltransferase easF that methylates 4-dimethylallyl-L-tryptophan in the presence of S-adenosyl-L-methionine, resulting in the formation of 4-dimethylallyl-L-abrine (PubMed:22403186). The catalase easC and the FAD-dependent oxidoreductase easE then transform 4-dimethylallyl-L-abrine to chanoclavine-I which is further oxidized by easD in the presence of NAD(+), resulting in the formation of chanoclavine-I aldehyde (PubMed:22403186). Chanoclavine-I aldehyde is the precursor of ergoamides and ergopeptines in Clavicipitaceae, and clavine-type alcaloids such as fumiclavine in Trichocomaceae (PubMed:22403186). However, the metabolites downstream of chanoclavine-I aldehyde in Arthrodermataceae have not been identified yet (PubMed:22403186).</text>
</comment>
<comment type="catalytic activity">
    <reaction evidence="1">
        <text>4-(3-methylbut-2-enyl)-L-tryptophan + S-adenosyl-L-methionine = 4-(3-methylbut-2-enyl)-L-abrine + S-adenosyl-L-homocysteine + H(+)</text>
        <dbReference type="Rhea" id="RHEA:34435"/>
        <dbReference type="ChEBI" id="CHEBI:15378"/>
        <dbReference type="ChEBI" id="CHEBI:57856"/>
        <dbReference type="ChEBI" id="CHEBI:58209"/>
        <dbReference type="ChEBI" id="CHEBI:59789"/>
        <dbReference type="ChEBI" id="CHEBI:67248"/>
        <dbReference type="EC" id="2.1.1.261"/>
    </reaction>
</comment>
<comment type="pathway">
    <text evidence="5">Alkaloid biosynthesis; ergot alkaloid biosynthesis.</text>
</comment>
<comment type="subunit">
    <text evidence="1">Homodimer.</text>
</comment>
<comment type="similarity">
    <text evidence="4">Belongs to the methyltransferase superfamily.</text>
</comment>
<comment type="sequence caution" evidence="4">
    <conflict type="erroneous initiation">
        <sequence resource="EMBL-CDS" id="EFE43381"/>
    </conflict>
    <text>Extended N-terminus.</text>
</comment>
<sequence>MGSINPPQILDIRRSKFEESIPKQVEAGLLSSPKTLPALLFYSTEGIQHWNRYSHASDFYPRHEEIQILKDKATDMAASIADGSVVVDLGSASLDKVIHLLEALEAAQKKVTYYALDLSFSELTSTLQAIPTDQFVHVQFSALHGTFDDGLQWLKETLVIRDQPHCLLLFGLTIGNFSRPNAAKFLHNIASHALVESPSQSSILLTLDSCKVPTKVIRAYTAEGVVPFALESLKYGNTLFQQDAGENVFDPEDWYFLSEWNYVLGRHEASLVPRSKDIKLGRPLDKIVVGKHEKVRFGCSYKYDSEERKELFGTAGLRDVKSWSKEGCDVAFYQLKCCPN</sequence>
<feature type="chain" id="PRO_0000439140" description="4-dimethylallyltryptophan N-methyltransferase easF">
    <location>
        <begin position="1"/>
        <end position="340"/>
    </location>
</feature>
<accession>D4D447</accession>
<proteinExistence type="inferred from homology"/>
<dbReference type="EC" id="2.1.1.261" evidence="1"/>
<dbReference type="EMBL" id="ACYE01000098">
    <property type="protein sequence ID" value="EFE43381.1"/>
    <property type="status" value="ALT_INIT"/>
    <property type="molecule type" value="Genomic_DNA"/>
</dbReference>
<dbReference type="RefSeq" id="XP_003023999.1">
    <property type="nucleotide sequence ID" value="XM_003023953.1"/>
</dbReference>
<dbReference type="SMR" id="D4D447"/>
<dbReference type="GeneID" id="9582692"/>
<dbReference type="KEGG" id="tve:TRV_01861"/>
<dbReference type="HOGENOM" id="CLU_049766_0_2_1"/>
<dbReference type="OrthoDB" id="677at34384"/>
<dbReference type="UniPathway" id="UPA00327"/>
<dbReference type="Proteomes" id="UP000008383">
    <property type="component" value="Unassembled WGS sequence"/>
</dbReference>
<dbReference type="GO" id="GO:0008168">
    <property type="term" value="F:methyltransferase activity"/>
    <property type="evidence" value="ECO:0007669"/>
    <property type="project" value="UniProtKB-KW"/>
</dbReference>
<dbReference type="GO" id="GO:0035835">
    <property type="term" value="P:indole alkaloid biosynthetic process"/>
    <property type="evidence" value="ECO:0007669"/>
    <property type="project" value="UniProtKB-UniPathway"/>
</dbReference>
<dbReference type="GO" id="GO:0032259">
    <property type="term" value="P:methylation"/>
    <property type="evidence" value="ECO:0007669"/>
    <property type="project" value="UniProtKB-KW"/>
</dbReference>
<dbReference type="Gene3D" id="3.40.50.150">
    <property type="entry name" value="Vaccinia Virus protein VP39"/>
    <property type="match status" value="1"/>
</dbReference>
<dbReference type="InterPro" id="IPR051128">
    <property type="entry name" value="EgtD_Methyltrsf_superfamily"/>
</dbReference>
<dbReference type="InterPro" id="IPR019257">
    <property type="entry name" value="MeTrfase_dom"/>
</dbReference>
<dbReference type="InterPro" id="IPR017804">
    <property type="entry name" value="MeTrfase_EgtD-like"/>
</dbReference>
<dbReference type="InterPro" id="IPR029063">
    <property type="entry name" value="SAM-dependent_MTases_sf"/>
</dbReference>
<dbReference type="InterPro" id="IPR017805">
    <property type="entry name" value="SAM_MeTrfase_EasF-type_put"/>
</dbReference>
<dbReference type="NCBIfam" id="TIGR03439">
    <property type="entry name" value="methyl_EasF"/>
    <property type="match status" value="1"/>
</dbReference>
<dbReference type="PANTHER" id="PTHR43397">
    <property type="entry name" value="ERGOTHIONEINE BIOSYNTHESIS PROTEIN 1"/>
    <property type="match status" value="1"/>
</dbReference>
<dbReference type="PANTHER" id="PTHR43397:SF1">
    <property type="entry name" value="ERGOTHIONEINE BIOSYNTHESIS PROTEIN 1"/>
    <property type="match status" value="1"/>
</dbReference>
<dbReference type="Pfam" id="PF10017">
    <property type="entry name" value="Methyltransf_33"/>
    <property type="match status" value="1"/>
</dbReference>
<dbReference type="PIRSF" id="PIRSF018005">
    <property type="entry name" value="UCP018005"/>
    <property type="match status" value="1"/>
</dbReference>
<gene>
    <name evidence="3" type="primary">easF</name>
    <name type="ORF">TRV_01861</name>
</gene>